<protein>
    <recommendedName>
        <fullName evidence="1">GTPase Era</fullName>
    </recommendedName>
</protein>
<evidence type="ECO:0000255" key="1">
    <source>
        <dbReference type="HAMAP-Rule" id="MF_00367"/>
    </source>
</evidence>
<evidence type="ECO:0000255" key="2">
    <source>
        <dbReference type="PROSITE-ProRule" id="PRU01050"/>
    </source>
</evidence>
<feature type="chain" id="PRO_1000079756" description="GTPase Era">
    <location>
        <begin position="1"/>
        <end position="298"/>
    </location>
</feature>
<feature type="domain" description="Era-type G" evidence="2">
    <location>
        <begin position="3"/>
        <end position="170"/>
    </location>
</feature>
<feature type="domain" description="KH type-2" evidence="1">
    <location>
        <begin position="201"/>
        <end position="279"/>
    </location>
</feature>
<feature type="region of interest" description="G1" evidence="2">
    <location>
        <begin position="11"/>
        <end position="18"/>
    </location>
</feature>
<feature type="region of interest" description="G2" evidence="2">
    <location>
        <begin position="37"/>
        <end position="41"/>
    </location>
</feature>
<feature type="region of interest" description="G3" evidence="2">
    <location>
        <begin position="58"/>
        <end position="61"/>
    </location>
</feature>
<feature type="region of interest" description="G4" evidence="2">
    <location>
        <begin position="120"/>
        <end position="123"/>
    </location>
</feature>
<feature type="region of interest" description="G5" evidence="2">
    <location>
        <begin position="149"/>
        <end position="151"/>
    </location>
</feature>
<feature type="binding site" evidence="1">
    <location>
        <begin position="11"/>
        <end position="18"/>
    </location>
    <ligand>
        <name>GTP</name>
        <dbReference type="ChEBI" id="CHEBI:37565"/>
    </ligand>
</feature>
<feature type="binding site" evidence="1">
    <location>
        <begin position="58"/>
        <end position="62"/>
    </location>
    <ligand>
        <name>GTP</name>
        <dbReference type="ChEBI" id="CHEBI:37565"/>
    </ligand>
</feature>
<feature type="binding site" evidence="1">
    <location>
        <begin position="120"/>
        <end position="123"/>
    </location>
    <ligand>
        <name>GTP</name>
        <dbReference type="ChEBI" id="CHEBI:37565"/>
    </ligand>
</feature>
<organism>
    <name type="scientific">Streptococcus pyogenes serotype M28 (strain MGAS6180)</name>
    <dbReference type="NCBI Taxonomy" id="319701"/>
    <lineage>
        <taxon>Bacteria</taxon>
        <taxon>Bacillati</taxon>
        <taxon>Bacillota</taxon>
        <taxon>Bacilli</taxon>
        <taxon>Lactobacillales</taxon>
        <taxon>Streptococcaceae</taxon>
        <taxon>Streptococcus</taxon>
    </lineage>
</organism>
<accession>Q48UW6</accession>
<comment type="function">
    <text evidence="1">An essential GTPase that binds both GDP and GTP, with rapid nucleotide exchange. Plays a role in 16S rRNA processing and 30S ribosomal subunit biogenesis and possibly also in cell cycle regulation and energy metabolism.</text>
</comment>
<comment type="subunit">
    <text evidence="1">Monomer.</text>
</comment>
<comment type="subcellular location">
    <subcellularLocation>
        <location>Cytoplasm</location>
    </subcellularLocation>
    <subcellularLocation>
        <location evidence="1">Cell membrane</location>
        <topology evidence="1">Peripheral membrane protein</topology>
    </subcellularLocation>
</comment>
<comment type="similarity">
    <text evidence="1 2">Belongs to the TRAFAC class TrmE-Era-EngA-EngB-Septin-like GTPase superfamily. Era GTPase family.</text>
</comment>
<keyword id="KW-1003">Cell membrane</keyword>
<keyword id="KW-0963">Cytoplasm</keyword>
<keyword id="KW-0342">GTP-binding</keyword>
<keyword id="KW-0472">Membrane</keyword>
<keyword id="KW-0547">Nucleotide-binding</keyword>
<keyword id="KW-0690">Ribosome biogenesis</keyword>
<keyword id="KW-0694">RNA-binding</keyword>
<keyword id="KW-0699">rRNA-binding</keyword>
<dbReference type="EMBL" id="CP000056">
    <property type="protein sequence ID" value="AAX71490.1"/>
    <property type="molecule type" value="Genomic_DNA"/>
</dbReference>
<dbReference type="RefSeq" id="WP_002985743.1">
    <property type="nucleotide sequence ID" value="NC_007296.2"/>
</dbReference>
<dbReference type="SMR" id="Q48UW6"/>
<dbReference type="GeneID" id="69901289"/>
<dbReference type="KEGG" id="spb:M28_Spy0376"/>
<dbReference type="HOGENOM" id="CLU_038009_1_0_9"/>
<dbReference type="GO" id="GO:0005829">
    <property type="term" value="C:cytosol"/>
    <property type="evidence" value="ECO:0007669"/>
    <property type="project" value="TreeGrafter"/>
</dbReference>
<dbReference type="GO" id="GO:0005886">
    <property type="term" value="C:plasma membrane"/>
    <property type="evidence" value="ECO:0007669"/>
    <property type="project" value="UniProtKB-SubCell"/>
</dbReference>
<dbReference type="GO" id="GO:0005525">
    <property type="term" value="F:GTP binding"/>
    <property type="evidence" value="ECO:0007669"/>
    <property type="project" value="UniProtKB-UniRule"/>
</dbReference>
<dbReference type="GO" id="GO:0003924">
    <property type="term" value="F:GTPase activity"/>
    <property type="evidence" value="ECO:0007669"/>
    <property type="project" value="UniProtKB-UniRule"/>
</dbReference>
<dbReference type="GO" id="GO:0043024">
    <property type="term" value="F:ribosomal small subunit binding"/>
    <property type="evidence" value="ECO:0007669"/>
    <property type="project" value="TreeGrafter"/>
</dbReference>
<dbReference type="GO" id="GO:0070181">
    <property type="term" value="F:small ribosomal subunit rRNA binding"/>
    <property type="evidence" value="ECO:0007669"/>
    <property type="project" value="UniProtKB-UniRule"/>
</dbReference>
<dbReference type="GO" id="GO:0000028">
    <property type="term" value="P:ribosomal small subunit assembly"/>
    <property type="evidence" value="ECO:0007669"/>
    <property type="project" value="TreeGrafter"/>
</dbReference>
<dbReference type="CDD" id="cd04163">
    <property type="entry name" value="Era"/>
    <property type="match status" value="1"/>
</dbReference>
<dbReference type="CDD" id="cd22534">
    <property type="entry name" value="KH-II_Era"/>
    <property type="match status" value="1"/>
</dbReference>
<dbReference type="FunFam" id="3.30.300.20:FF:000003">
    <property type="entry name" value="GTPase Era"/>
    <property type="match status" value="1"/>
</dbReference>
<dbReference type="FunFam" id="3.40.50.300:FF:000094">
    <property type="entry name" value="GTPase Era"/>
    <property type="match status" value="1"/>
</dbReference>
<dbReference type="Gene3D" id="3.30.300.20">
    <property type="match status" value="1"/>
</dbReference>
<dbReference type="Gene3D" id="3.40.50.300">
    <property type="entry name" value="P-loop containing nucleotide triphosphate hydrolases"/>
    <property type="match status" value="1"/>
</dbReference>
<dbReference type="HAMAP" id="MF_00367">
    <property type="entry name" value="GTPase_Era"/>
    <property type="match status" value="1"/>
</dbReference>
<dbReference type="InterPro" id="IPR030388">
    <property type="entry name" value="G_ERA_dom"/>
</dbReference>
<dbReference type="InterPro" id="IPR006073">
    <property type="entry name" value="GTP-bd"/>
</dbReference>
<dbReference type="InterPro" id="IPR005662">
    <property type="entry name" value="GTPase_Era-like"/>
</dbReference>
<dbReference type="InterPro" id="IPR015946">
    <property type="entry name" value="KH_dom-like_a/b"/>
</dbReference>
<dbReference type="InterPro" id="IPR004044">
    <property type="entry name" value="KH_dom_type_2"/>
</dbReference>
<dbReference type="InterPro" id="IPR009019">
    <property type="entry name" value="KH_sf_prok-type"/>
</dbReference>
<dbReference type="InterPro" id="IPR027417">
    <property type="entry name" value="P-loop_NTPase"/>
</dbReference>
<dbReference type="InterPro" id="IPR005225">
    <property type="entry name" value="Small_GTP-bd"/>
</dbReference>
<dbReference type="NCBIfam" id="TIGR00436">
    <property type="entry name" value="era"/>
    <property type="match status" value="1"/>
</dbReference>
<dbReference type="NCBIfam" id="NF000908">
    <property type="entry name" value="PRK00089.1"/>
    <property type="match status" value="1"/>
</dbReference>
<dbReference type="NCBIfam" id="TIGR00231">
    <property type="entry name" value="small_GTP"/>
    <property type="match status" value="1"/>
</dbReference>
<dbReference type="PANTHER" id="PTHR42698">
    <property type="entry name" value="GTPASE ERA"/>
    <property type="match status" value="1"/>
</dbReference>
<dbReference type="PANTHER" id="PTHR42698:SF1">
    <property type="entry name" value="GTPASE ERA, MITOCHONDRIAL"/>
    <property type="match status" value="1"/>
</dbReference>
<dbReference type="Pfam" id="PF07650">
    <property type="entry name" value="KH_2"/>
    <property type="match status" value="1"/>
</dbReference>
<dbReference type="Pfam" id="PF01926">
    <property type="entry name" value="MMR_HSR1"/>
    <property type="match status" value="1"/>
</dbReference>
<dbReference type="SUPFAM" id="SSF52540">
    <property type="entry name" value="P-loop containing nucleoside triphosphate hydrolases"/>
    <property type="match status" value="1"/>
</dbReference>
<dbReference type="SUPFAM" id="SSF54814">
    <property type="entry name" value="Prokaryotic type KH domain (KH-domain type II)"/>
    <property type="match status" value="1"/>
</dbReference>
<dbReference type="PROSITE" id="PS51713">
    <property type="entry name" value="G_ERA"/>
    <property type="match status" value="1"/>
</dbReference>
<dbReference type="PROSITE" id="PS50823">
    <property type="entry name" value="KH_TYPE_2"/>
    <property type="match status" value="1"/>
</dbReference>
<name>ERA_STRPM</name>
<gene>
    <name evidence="1" type="primary">era</name>
    <name type="ordered locus">M28_Spy0376</name>
</gene>
<reference key="1">
    <citation type="journal article" date="2005" name="J. Infect. Dis.">
        <title>Genome sequence of a serotype M28 strain of group A Streptococcus: potential new insights into puerperal sepsis and bacterial disease specificity.</title>
        <authorList>
            <person name="Green N.M."/>
            <person name="Zhang S."/>
            <person name="Porcella S.F."/>
            <person name="Nagiec M.J."/>
            <person name="Barbian K.D."/>
            <person name="Beres S.B."/>
            <person name="Lefebvre R.B."/>
            <person name="Musser J.M."/>
        </authorList>
    </citation>
    <scope>NUCLEOTIDE SEQUENCE [LARGE SCALE GENOMIC DNA]</scope>
    <source>
        <strain>MGAS6180</strain>
    </source>
</reference>
<proteinExistence type="inferred from homology"/>
<sequence length="298" mass="34107">MFKSGFVAILGRPNVGKSTFLNHVMGQKIAIMSDKAQTTRNKIMGIYTTETEQIVFIDTPGIHKPKTALGDFMVESAYSTLREVETVLFMVPADEKRGKGDDMIIERLKAAKIPVILVINKIDKVHPDQLLEQIDDFRSQMDFKEVVPISALEGNNVPTLIKLLTDNLEEGFQYFPEDQITDHPERFLVSEMVREKVLHLTQQEVPHSVAVVVESMKRDEETDKVHIRATIMVERDSQKGIIIGKQGAMLKKIGKMARRDIELMLGDKVYLETWVKVKKNWRDKKLDLADFGYNEKEY</sequence>